<sequence>MQFGADTEFSNMCGVTLMNTPIGRVVADVMGAKDGVELTEYPSMIRVDGVNRLDFDYDELTDALGQDFDGSIFEEISSTHYGRMVHLDDKTILFASPEDAAEFIGFDLTAS</sequence>
<proteinExistence type="evidence at protein level"/>
<accession>Q768T2</accession>
<gene>
    <name evidence="3" type="primary">prmD</name>
</gene>
<reference key="1">
    <citation type="journal article" date="2003" name="J. Bacteriol.">
        <title>Propane monooxygenase and NAD+-dependent secondary alcohol dehydrogenase in propane metabolism by Gordonia sp. strain TY-5.</title>
        <authorList>
            <person name="Kotani T."/>
            <person name="Yamamoto T."/>
            <person name="Yurimoto H."/>
            <person name="Sakai Y."/>
            <person name="Kato N."/>
        </authorList>
    </citation>
    <scope>NUCLEOTIDE SEQUENCE [GENOMIC DNA]</scope>
    <scope>FUNCTION</scope>
    <scope>INDUCTION BY PROPANE</scope>
    <scope>SUBUNIT</scope>
    <source>
        <strain evidence="6">TY-5</strain>
    </source>
</reference>
<reference key="2">
    <citation type="journal article" date="2011" name="Appl. Environ. Microbiol.">
        <title>Identification of the monooxygenase gene clusters responsible for the regioselective oxidation of phenol to hydroquinone in mycobacteria.</title>
        <authorList>
            <person name="Furuya T."/>
            <person name="Hirose S."/>
            <person name="Osanai H."/>
            <person name="Semba H."/>
            <person name="Kino K."/>
        </authorList>
    </citation>
    <scope>INDUCTION BY ACETONE</scope>
    <source>
        <strain>TY-5</strain>
    </source>
</reference>
<dbReference type="EMBL" id="AB112920">
    <property type="protein sequence ID" value="BAD03959.1"/>
    <property type="molecule type" value="Genomic_DNA"/>
</dbReference>
<dbReference type="SMR" id="Q768T2"/>
<dbReference type="BioCyc" id="MetaCyc:MONOMER-19807"/>
<dbReference type="BRENDA" id="1.14.13.227">
    <property type="organism ID" value="7737"/>
</dbReference>
<dbReference type="GO" id="GO:0004497">
    <property type="term" value="F:monooxygenase activity"/>
    <property type="evidence" value="ECO:0007669"/>
    <property type="project" value="InterPro"/>
</dbReference>
<dbReference type="Gene3D" id="3.90.56.10">
    <property type="entry name" value="Monooxygenase component MmoB/DmpM"/>
    <property type="match status" value="1"/>
</dbReference>
<dbReference type="InterPro" id="IPR003454">
    <property type="entry name" value="MOase_MmoB_DmpM"/>
</dbReference>
<dbReference type="InterPro" id="IPR036889">
    <property type="entry name" value="mOase_MmoB_DmpM_sf"/>
</dbReference>
<dbReference type="NCBIfam" id="NF045941">
    <property type="entry name" value="PropMonoxMimD"/>
    <property type="match status" value="1"/>
</dbReference>
<dbReference type="Pfam" id="PF02406">
    <property type="entry name" value="MmoB_DmpM"/>
    <property type="match status" value="1"/>
</dbReference>
<dbReference type="SUPFAM" id="SSF56029">
    <property type="entry name" value="Monooxygenase (hydroxylase) regulatory protein"/>
    <property type="match status" value="1"/>
</dbReference>
<organism>
    <name type="scientific">Gordonia sp. (strain TY-5)</name>
    <dbReference type="NCBI Taxonomy" id="235467"/>
    <lineage>
        <taxon>Bacteria</taxon>
        <taxon>Bacillati</taxon>
        <taxon>Actinomycetota</taxon>
        <taxon>Actinomycetes</taxon>
        <taxon>Mycobacteriales</taxon>
        <taxon>Gordoniaceae</taxon>
        <taxon>Gordonia</taxon>
    </lineage>
</organism>
<feature type="chain" id="PRO_0000442966" description="Propane 2-monooxygenase, effector component">
    <location>
        <begin position="1"/>
        <end position="111"/>
    </location>
</feature>
<protein>
    <recommendedName>
        <fullName evidence="3">Propane 2-monooxygenase, effector component</fullName>
        <shortName evidence="3">Prm</shortName>
    </recommendedName>
    <alternativeName>
        <fullName>Propane 2-monooxygenase, coupling protein component</fullName>
    </alternativeName>
</protein>
<comment type="function">
    <text evidence="1">Effector component of the propane 2-monooxygenase multicomponent enzyme system which is involved in the degradation of propane via the O2-dependent hydroxylation of propane.</text>
</comment>
<comment type="subunit">
    <text evidence="5">The propane 2-monooxygenase multicomponent enzyme system is composed of an electron transfer component and a monooxygenase component interacting with the effector protein PrmD. The electron transfer component is composed of a reductase (PrmB), and the monooxygenase component is formed by a large subunit (PrmA) and a small subunit (PrmC).</text>
</comment>
<comment type="induction">
    <text evidence="1 2">By propane and acetone.</text>
</comment>
<comment type="similarity">
    <text evidence="4">Belongs to the TmoD/XamoD family.</text>
</comment>
<name>PRMD_GORST</name>
<evidence type="ECO:0000269" key="1">
    <source>
    </source>
</evidence>
<evidence type="ECO:0000269" key="2">
    <source>
    </source>
</evidence>
<evidence type="ECO:0000303" key="3">
    <source>
    </source>
</evidence>
<evidence type="ECO:0000305" key="4"/>
<evidence type="ECO:0000305" key="5">
    <source>
    </source>
</evidence>
<evidence type="ECO:0000312" key="6">
    <source>
        <dbReference type="EMBL" id="BAD03959.1"/>
    </source>
</evidence>